<dbReference type="EMBL" id="Y17157">
    <property type="protein sequence ID" value="CAA76663.1"/>
    <property type="molecule type" value="Genomic_DNA"/>
</dbReference>
<dbReference type="SMR" id="O69268"/>
<dbReference type="STRING" id="1421.A2J09_11485"/>
<dbReference type="GO" id="GO:0005524">
    <property type="term" value="F:ATP binding"/>
    <property type="evidence" value="ECO:0007669"/>
    <property type="project" value="UniProtKB-UniRule"/>
</dbReference>
<dbReference type="GO" id="GO:0140662">
    <property type="term" value="F:ATP-dependent protein folding chaperone"/>
    <property type="evidence" value="ECO:0007669"/>
    <property type="project" value="InterPro"/>
</dbReference>
<dbReference type="GO" id="GO:0051082">
    <property type="term" value="F:unfolded protein binding"/>
    <property type="evidence" value="ECO:0007669"/>
    <property type="project" value="InterPro"/>
</dbReference>
<dbReference type="CDD" id="cd10234">
    <property type="entry name" value="ASKHA_NBD_HSP70_DnaK-like"/>
    <property type="match status" value="1"/>
</dbReference>
<dbReference type="FunFam" id="2.60.34.10:FF:000014">
    <property type="entry name" value="Chaperone protein DnaK HSP70"/>
    <property type="match status" value="1"/>
</dbReference>
<dbReference type="FunFam" id="1.20.1270.10:FF:000001">
    <property type="entry name" value="Molecular chaperone DnaK"/>
    <property type="match status" value="1"/>
</dbReference>
<dbReference type="FunFam" id="3.30.420.40:FF:000071">
    <property type="entry name" value="Molecular chaperone DnaK"/>
    <property type="match status" value="1"/>
</dbReference>
<dbReference type="FunFam" id="3.90.640.10:FF:000003">
    <property type="entry name" value="Molecular chaperone DnaK"/>
    <property type="match status" value="1"/>
</dbReference>
<dbReference type="Gene3D" id="1.20.1270.10">
    <property type="match status" value="1"/>
</dbReference>
<dbReference type="Gene3D" id="3.30.420.40">
    <property type="match status" value="2"/>
</dbReference>
<dbReference type="Gene3D" id="3.90.640.10">
    <property type="entry name" value="Actin, Chain A, domain 4"/>
    <property type="match status" value="1"/>
</dbReference>
<dbReference type="Gene3D" id="2.60.34.10">
    <property type="entry name" value="Substrate Binding Domain Of DNAk, Chain A, domain 1"/>
    <property type="match status" value="1"/>
</dbReference>
<dbReference type="HAMAP" id="MF_00332">
    <property type="entry name" value="DnaK"/>
    <property type="match status" value="1"/>
</dbReference>
<dbReference type="InterPro" id="IPR043129">
    <property type="entry name" value="ATPase_NBD"/>
</dbReference>
<dbReference type="InterPro" id="IPR012725">
    <property type="entry name" value="Chaperone_DnaK"/>
</dbReference>
<dbReference type="InterPro" id="IPR018181">
    <property type="entry name" value="Heat_shock_70_CS"/>
</dbReference>
<dbReference type="InterPro" id="IPR029048">
    <property type="entry name" value="HSP70_C_sf"/>
</dbReference>
<dbReference type="InterPro" id="IPR029047">
    <property type="entry name" value="HSP70_peptide-bd_sf"/>
</dbReference>
<dbReference type="InterPro" id="IPR013126">
    <property type="entry name" value="Hsp_70_fam"/>
</dbReference>
<dbReference type="NCBIfam" id="NF001413">
    <property type="entry name" value="PRK00290.1"/>
    <property type="match status" value="1"/>
</dbReference>
<dbReference type="NCBIfam" id="TIGR02350">
    <property type="entry name" value="prok_dnaK"/>
    <property type="match status" value="1"/>
</dbReference>
<dbReference type="PANTHER" id="PTHR19375">
    <property type="entry name" value="HEAT SHOCK PROTEIN 70KDA"/>
    <property type="match status" value="1"/>
</dbReference>
<dbReference type="Pfam" id="PF00012">
    <property type="entry name" value="HSP70"/>
    <property type="match status" value="2"/>
</dbReference>
<dbReference type="PRINTS" id="PR00301">
    <property type="entry name" value="HEATSHOCK70"/>
</dbReference>
<dbReference type="SUPFAM" id="SSF53067">
    <property type="entry name" value="Actin-like ATPase domain"/>
    <property type="match status" value="2"/>
</dbReference>
<dbReference type="SUPFAM" id="SSF100934">
    <property type="entry name" value="Heat shock protein 70kD (HSP70), C-terminal subdomain"/>
    <property type="match status" value="1"/>
</dbReference>
<dbReference type="SUPFAM" id="SSF100920">
    <property type="entry name" value="Heat shock protein 70kD (HSP70), peptide-binding domain"/>
    <property type="match status" value="1"/>
</dbReference>
<dbReference type="PROSITE" id="PS00297">
    <property type="entry name" value="HSP70_1"/>
    <property type="match status" value="1"/>
</dbReference>
<dbReference type="PROSITE" id="PS00329">
    <property type="entry name" value="HSP70_2"/>
    <property type="match status" value="1"/>
</dbReference>
<dbReference type="PROSITE" id="PS01036">
    <property type="entry name" value="HSP70_3"/>
    <property type="match status" value="1"/>
</dbReference>
<organism>
    <name type="scientific">Lysinibacillus sphaericus</name>
    <name type="common">Bacillus sphaericus</name>
    <dbReference type="NCBI Taxonomy" id="1421"/>
    <lineage>
        <taxon>Bacteria</taxon>
        <taxon>Bacillati</taxon>
        <taxon>Bacillota</taxon>
        <taxon>Bacilli</taxon>
        <taxon>Bacillales</taxon>
        <taxon>Bacillaceae</taxon>
        <taxon>Lysinibacillus</taxon>
    </lineage>
</organism>
<feature type="initiator methionine" description="Removed" evidence="1">
    <location>
        <position position="1"/>
    </location>
</feature>
<feature type="chain" id="PRO_0000078418" description="Chaperone protein DnaK">
    <location>
        <begin position="2"/>
        <end position="611"/>
    </location>
</feature>
<feature type="region of interest" description="Disordered" evidence="2">
    <location>
        <begin position="577"/>
        <end position="611"/>
    </location>
</feature>
<feature type="compositionally biased region" description="Low complexity" evidence="2">
    <location>
        <begin position="577"/>
        <end position="591"/>
    </location>
</feature>
<feature type="compositionally biased region" description="Acidic residues" evidence="2">
    <location>
        <begin position="599"/>
        <end position="611"/>
    </location>
</feature>
<feature type="modified residue" description="Phosphothreonine; by autocatalysis" evidence="1">
    <location>
        <position position="173"/>
    </location>
</feature>
<reference key="1">
    <citation type="submission" date="1998-09" db="EMBL/GenBank/DDBJ databases">
        <authorList>
            <person name="Ahmad S."/>
            <person name="Selvapandiyan A."/>
            <person name="Gasbarri M."/>
            <person name="Bhatnagar R.K."/>
        </authorList>
    </citation>
    <scope>NUCLEOTIDE SEQUENCE [GENOMIC DNA]</scope>
    <source>
        <strain>ATCC 33203 / 1593</strain>
    </source>
</reference>
<evidence type="ECO:0000250" key="1"/>
<evidence type="ECO:0000256" key="2">
    <source>
        <dbReference type="SAM" id="MobiDB-lite"/>
    </source>
</evidence>
<evidence type="ECO:0000305" key="3"/>
<accession>O69268</accession>
<keyword id="KW-0067">ATP-binding</keyword>
<keyword id="KW-0143">Chaperone</keyword>
<keyword id="KW-0547">Nucleotide-binding</keyword>
<keyword id="KW-0597">Phosphoprotein</keyword>
<keyword id="KW-0346">Stress response</keyword>
<sequence>MSKIIGIDLGTTNSCVSVLEGGEPKVIPNPEGNRTTPSVVAFKNGERQVGEVAKRQSVTNPNTIISIKSKMGTAEKVTVEDKDYTPQEVSAMILQYLKGYAEDYLGEKVTKAVITVPAYFNDAQRQATKDAGKIAGLEVERIINEPTAAALRYGLDKQDQDQKVLVFDLGGGTFDVSILELGDGVFEVLATAGDNKLGGDDFDDAIIEYLVAEFKKENGIDLSKDKMAMQRLKDAAEKAKKDLSGVTSTQISLPFITAGEAGPLHLEISLTRAKFDEITLPLVNRTVGPVRQALSDAGLSTSEIDQVILVGGSTRIPAVQEAVRKETNKEPHRGVNPDEVVAMGAAVQGGVLTGDVKDVVLLDVTPLSLGIETMGGVFTKLIDRNTTIPTSKSQVFSTAADNQPAVDIHVLQGERSMAADNKTLGRFQLADIPPAPRGVPQIEVTFDIDKNGIVSVKAKDLGTNKEQTIVIQSDSGLSEAEIERMVKDAEANRDADAKRKEEADLRNEADQLVFQVDKTITDLGEQITEDEKKSVEDARDELKKALEAGELEGIKAAKEKLEGVLQPLVMKVYEQAAAAAQARQGGEADAGAGKKDDGVVDADFEEVKDDK</sequence>
<name>DNAK_LYSSH</name>
<gene>
    <name type="primary">dnaK</name>
</gene>
<comment type="function">
    <text evidence="1">Acts as a chaperone.</text>
</comment>
<comment type="induction">
    <text evidence="1">By stress conditions e.g. heat shock (By similarity).</text>
</comment>
<comment type="similarity">
    <text evidence="3">Belongs to the heat shock protein 70 family.</text>
</comment>
<proteinExistence type="inferred from homology"/>
<protein>
    <recommendedName>
        <fullName>Chaperone protein DnaK</fullName>
    </recommendedName>
    <alternativeName>
        <fullName>HSP70</fullName>
    </alternativeName>
    <alternativeName>
        <fullName>Heat shock 70 kDa protein</fullName>
    </alternativeName>
    <alternativeName>
        <fullName>Heat shock protein 70</fullName>
    </alternativeName>
</protein>